<sequence length="157" mass="17731">MSQVILDLQIACADSQGLPTEGDFQRWLEAVLPLFQPVSEVTIRLVDEAESHDLNLTYRGKDKSTNVLSFPFEAPPEIELPLLGDLIICRQVVEKEAIEQEKALLAHWAHMVVHGSLHLLGYDHIDDDEAEEMELIETEIMHGLGYPDPYISEKDPD</sequence>
<feature type="chain" id="PRO_1000089231" description="Endoribonuclease YbeY">
    <location>
        <begin position="1"/>
        <end position="157"/>
    </location>
</feature>
<feature type="binding site" evidence="1">
    <location>
        <position position="114"/>
    </location>
    <ligand>
        <name>Zn(2+)</name>
        <dbReference type="ChEBI" id="CHEBI:29105"/>
        <note>catalytic</note>
    </ligand>
</feature>
<feature type="binding site" evidence="1">
    <location>
        <position position="118"/>
    </location>
    <ligand>
        <name>Zn(2+)</name>
        <dbReference type="ChEBI" id="CHEBI:29105"/>
        <note>catalytic</note>
    </ligand>
</feature>
<feature type="binding site" evidence="1">
    <location>
        <position position="124"/>
    </location>
    <ligand>
        <name>Zn(2+)</name>
        <dbReference type="ChEBI" id="CHEBI:29105"/>
        <note>catalytic</note>
    </ligand>
</feature>
<organism>
    <name type="scientific">Yersinia pseudotuberculosis serotype IB (strain PB1/+)</name>
    <dbReference type="NCBI Taxonomy" id="502801"/>
    <lineage>
        <taxon>Bacteria</taxon>
        <taxon>Pseudomonadati</taxon>
        <taxon>Pseudomonadota</taxon>
        <taxon>Gammaproteobacteria</taxon>
        <taxon>Enterobacterales</taxon>
        <taxon>Yersiniaceae</taxon>
        <taxon>Yersinia</taxon>
    </lineage>
</organism>
<proteinExistence type="inferred from homology"/>
<evidence type="ECO:0000255" key="1">
    <source>
        <dbReference type="HAMAP-Rule" id="MF_00009"/>
    </source>
</evidence>
<reference key="1">
    <citation type="submission" date="2008-04" db="EMBL/GenBank/DDBJ databases">
        <title>Complete sequence of Yersinia pseudotuberculosis PB1/+.</title>
        <authorList>
            <person name="Copeland A."/>
            <person name="Lucas S."/>
            <person name="Lapidus A."/>
            <person name="Glavina del Rio T."/>
            <person name="Dalin E."/>
            <person name="Tice H."/>
            <person name="Bruce D."/>
            <person name="Goodwin L."/>
            <person name="Pitluck S."/>
            <person name="Munk A.C."/>
            <person name="Brettin T."/>
            <person name="Detter J.C."/>
            <person name="Han C."/>
            <person name="Tapia R."/>
            <person name="Schmutz J."/>
            <person name="Larimer F."/>
            <person name="Land M."/>
            <person name="Hauser L."/>
            <person name="Challacombe J.F."/>
            <person name="Green L."/>
            <person name="Lindler L.E."/>
            <person name="Nikolich M.P."/>
            <person name="Richardson P."/>
        </authorList>
    </citation>
    <scope>NUCLEOTIDE SEQUENCE [LARGE SCALE GENOMIC DNA]</scope>
    <source>
        <strain>PB1/+</strain>
    </source>
</reference>
<accession>B2K894</accession>
<name>YBEY_YERPB</name>
<keyword id="KW-0963">Cytoplasm</keyword>
<keyword id="KW-0255">Endonuclease</keyword>
<keyword id="KW-0378">Hydrolase</keyword>
<keyword id="KW-0479">Metal-binding</keyword>
<keyword id="KW-0540">Nuclease</keyword>
<keyword id="KW-0690">Ribosome biogenesis</keyword>
<keyword id="KW-0698">rRNA processing</keyword>
<keyword id="KW-0862">Zinc</keyword>
<comment type="function">
    <text evidence="1">Single strand-specific metallo-endoribonuclease involved in late-stage 70S ribosome quality control and in maturation of the 3' terminus of the 16S rRNA.</text>
</comment>
<comment type="cofactor">
    <cofactor evidence="1">
        <name>Zn(2+)</name>
        <dbReference type="ChEBI" id="CHEBI:29105"/>
    </cofactor>
    <text evidence="1">Binds 1 zinc ion.</text>
</comment>
<comment type="subcellular location">
    <subcellularLocation>
        <location evidence="1">Cytoplasm</location>
    </subcellularLocation>
</comment>
<comment type="similarity">
    <text evidence="1">Belongs to the endoribonuclease YbeY family.</text>
</comment>
<dbReference type="EC" id="3.1.-.-" evidence="1"/>
<dbReference type="EMBL" id="CP001048">
    <property type="protein sequence ID" value="ACC88144.1"/>
    <property type="molecule type" value="Genomic_DNA"/>
</dbReference>
<dbReference type="RefSeq" id="WP_011191934.1">
    <property type="nucleotide sequence ID" value="NZ_CP009780.1"/>
</dbReference>
<dbReference type="SMR" id="B2K894"/>
<dbReference type="GeneID" id="96664631"/>
<dbReference type="KEGG" id="ypb:YPTS_1168"/>
<dbReference type="PATRIC" id="fig|502801.10.peg.515"/>
<dbReference type="GO" id="GO:0005737">
    <property type="term" value="C:cytoplasm"/>
    <property type="evidence" value="ECO:0007669"/>
    <property type="project" value="UniProtKB-SubCell"/>
</dbReference>
<dbReference type="GO" id="GO:0004222">
    <property type="term" value="F:metalloendopeptidase activity"/>
    <property type="evidence" value="ECO:0007669"/>
    <property type="project" value="InterPro"/>
</dbReference>
<dbReference type="GO" id="GO:0004521">
    <property type="term" value="F:RNA endonuclease activity"/>
    <property type="evidence" value="ECO:0007669"/>
    <property type="project" value="UniProtKB-UniRule"/>
</dbReference>
<dbReference type="GO" id="GO:0008270">
    <property type="term" value="F:zinc ion binding"/>
    <property type="evidence" value="ECO:0007669"/>
    <property type="project" value="UniProtKB-UniRule"/>
</dbReference>
<dbReference type="GO" id="GO:0006364">
    <property type="term" value="P:rRNA processing"/>
    <property type="evidence" value="ECO:0007669"/>
    <property type="project" value="UniProtKB-UniRule"/>
</dbReference>
<dbReference type="Gene3D" id="3.40.390.30">
    <property type="entry name" value="Metalloproteases ('zincins'), catalytic domain"/>
    <property type="match status" value="1"/>
</dbReference>
<dbReference type="HAMAP" id="MF_00009">
    <property type="entry name" value="Endoribonucl_YbeY"/>
    <property type="match status" value="1"/>
</dbReference>
<dbReference type="InterPro" id="IPR023091">
    <property type="entry name" value="MetalPrtase_cat_dom_sf_prd"/>
</dbReference>
<dbReference type="InterPro" id="IPR002036">
    <property type="entry name" value="YbeY"/>
</dbReference>
<dbReference type="InterPro" id="IPR020549">
    <property type="entry name" value="YbeY_CS"/>
</dbReference>
<dbReference type="NCBIfam" id="TIGR00043">
    <property type="entry name" value="rRNA maturation RNase YbeY"/>
    <property type="match status" value="1"/>
</dbReference>
<dbReference type="PANTHER" id="PTHR46986">
    <property type="entry name" value="ENDORIBONUCLEASE YBEY, CHLOROPLASTIC"/>
    <property type="match status" value="1"/>
</dbReference>
<dbReference type="PANTHER" id="PTHR46986:SF1">
    <property type="entry name" value="ENDORIBONUCLEASE YBEY, CHLOROPLASTIC"/>
    <property type="match status" value="1"/>
</dbReference>
<dbReference type="Pfam" id="PF02130">
    <property type="entry name" value="YbeY"/>
    <property type="match status" value="1"/>
</dbReference>
<dbReference type="SUPFAM" id="SSF55486">
    <property type="entry name" value="Metalloproteases ('zincins'), catalytic domain"/>
    <property type="match status" value="1"/>
</dbReference>
<dbReference type="PROSITE" id="PS01306">
    <property type="entry name" value="UPF0054"/>
    <property type="match status" value="1"/>
</dbReference>
<protein>
    <recommendedName>
        <fullName evidence="1">Endoribonuclease YbeY</fullName>
        <ecNumber evidence="1">3.1.-.-</ecNumber>
    </recommendedName>
</protein>
<gene>
    <name evidence="1" type="primary">ybeY</name>
    <name type="ordered locus">YPTS_1168</name>
</gene>